<feature type="chain" id="PRO_0000120625" description="NAD kinase">
    <location>
        <begin position="1"/>
        <end position="270"/>
    </location>
</feature>
<feature type="active site" description="Proton acceptor" evidence="1">
    <location>
        <position position="49"/>
    </location>
</feature>
<feature type="binding site" evidence="1">
    <location>
        <begin position="49"/>
        <end position="50"/>
    </location>
    <ligand>
        <name>NAD(+)</name>
        <dbReference type="ChEBI" id="CHEBI:57540"/>
    </ligand>
</feature>
<feature type="binding site" evidence="1">
    <location>
        <position position="54"/>
    </location>
    <ligand>
        <name>NAD(+)</name>
        <dbReference type="ChEBI" id="CHEBI:57540"/>
    </ligand>
</feature>
<feature type="binding site" evidence="1">
    <location>
        <begin position="126"/>
        <end position="127"/>
    </location>
    <ligand>
        <name>NAD(+)</name>
        <dbReference type="ChEBI" id="CHEBI:57540"/>
    </ligand>
</feature>
<feature type="binding site" evidence="1">
    <location>
        <position position="152"/>
    </location>
    <ligand>
        <name>NAD(+)</name>
        <dbReference type="ChEBI" id="CHEBI:57540"/>
    </ligand>
</feature>
<feature type="binding site" evidence="1">
    <location>
        <position position="154"/>
    </location>
    <ligand>
        <name>NAD(+)</name>
        <dbReference type="ChEBI" id="CHEBI:57540"/>
    </ligand>
</feature>
<feature type="binding site" evidence="1">
    <location>
        <begin position="165"/>
        <end position="170"/>
    </location>
    <ligand>
        <name>NAD(+)</name>
        <dbReference type="ChEBI" id="CHEBI:57540"/>
    </ligand>
</feature>
<feature type="binding site" evidence="1">
    <location>
        <position position="189"/>
    </location>
    <ligand>
        <name>NAD(+)</name>
        <dbReference type="ChEBI" id="CHEBI:57540"/>
    </ligand>
</feature>
<feature type="binding site" evidence="1">
    <location>
        <position position="227"/>
    </location>
    <ligand>
        <name>NAD(+)</name>
        <dbReference type="ChEBI" id="CHEBI:57540"/>
    </ligand>
</feature>
<keyword id="KW-0067">ATP-binding</keyword>
<keyword id="KW-0963">Cytoplasm</keyword>
<keyword id="KW-0418">Kinase</keyword>
<keyword id="KW-0520">NAD</keyword>
<keyword id="KW-0521">NADP</keyword>
<keyword id="KW-0547">Nucleotide-binding</keyword>
<keyword id="KW-1185">Reference proteome</keyword>
<keyword id="KW-0808">Transferase</keyword>
<evidence type="ECO:0000255" key="1">
    <source>
        <dbReference type="HAMAP-Rule" id="MF_00361"/>
    </source>
</evidence>
<reference key="1">
    <citation type="journal article" date="2001" name="Genome Res.">
        <title>The complete genome sequence of the lactic acid bacterium Lactococcus lactis ssp. lactis IL1403.</title>
        <authorList>
            <person name="Bolotin A."/>
            <person name="Wincker P."/>
            <person name="Mauger S."/>
            <person name="Jaillon O."/>
            <person name="Malarme K."/>
            <person name="Weissenbach J."/>
            <person name="Ehrlich S.D."/>
            <person name="Sorokin A."/>
        </authorList>
    </citation>
    <scope>NUCLEOTIDE SEQUENCE [LARGE SCALE GENOMIC DNA]</scope>
    <source>
        <strain>IL1403</strain>
    </source>
</reference>
<sequence length="270" mass="30382">MNFGKKVWLIGNSSEKSKKTLNKLSKILKAEHFVFDDINPEIVISVGGDGTLLRAMHMYEYQLDRVRFLGVHTGHLGFYTDFTDEDLFEVVEALYDENPAQAIHYPLIRVQVSFTDGYQIVRHVLNEATIRRASKTMVGDVRISDYLFERFRGDGLSISTPTGSTAYNKSIGGAVVHPRVKAMQVAEIASLNNVVYRTLGSPMIVAEKDTITVCPAPEDDYSLTFDQLTFEYKNIKSIEFSLDGTTISFANCAHTPFWERVSKSFIGEVE</sequence>
<protein>
    <recommendedName>
        <fullName evidence="1">NAD kinase</fullName>
        <ecNumber evidence="1">2.7.1.23</ecNumber>
    </recommendedName>
    <alternativeName>
        <fullName evidence="1">ATP-dependent NAD kinase</fullName>
    </alternativeName>
</protein>
<accession>Q9CIJ4</accession>
<gene>
    <name evidence="1" type="primary">nadK</name>
    <name type="ordered locus">LL0363</name>
    <name type="ORF">L166614</name>
</gene>
<dbReference type="EC" id="2.7.1.23" evidence="1"/>
<dbReference type="EMBL" id="AE005176">
    <property type="protein sequence ID" value="AAK04461.1"/>
    <property type="molecule type" value="Genomic_DNA"/>
</dbReference>
<dbReference type="PIR" id="C86670">
    <property type="entry name" value="C86670"/>
</dbReference>
<dbReference type="RefSeq" id="NP_266519.1">
    <property type="nucleotide sequence ID" value="NC_002662.1"/>
</dbReference>
<dbReference type="RefSeq" id="WP_003131619.1">
    <property type="nucleotide sequence ID" value="NC_002662.1"/>
</dbReference>
<dbReference type="SMR" id="Q9CIJ4"/>
<dbReference type="PaxDb" id="272623-L166614"/>
<dbReference type="EnsemblBacteria" id="AAK04461">
    <property type="protein sequence ID" value="AAK04461"/>
    <property type="gene ID" value="L166614"/>
</dbReference>
<dbReference type="KEGG" id="lla:L166614"/>
<dbReference type="PATRIC" id="fig|272623.7.peg.397"/>
<dbReference type="eggNOG" id="COG0061">
    <property type="taxonomic scope" value="Bacteria"/>
</dbReference>
<dbReference type="HOGENOM" id="CLU_008831_0_3_9"/>
<dbReference type="OrthoDB" id="9774737at2"/>
<dbReference type="Proteomes" id="UP000002196">
    <property type="component" value="Chromosome"/>
</dbReference>
<dbReference type="GO" id="GO:0005737">
    <property type="term" value="C:cytoplasm"/>
    <property type="evidence" value="ECO:0007669"/>
    <property type="project" value="UniProtKB-SubCell"/>
</dbReference>
<dbReference type="GO" id="GO:0005524">
    <property type="term" value="F:ATP binding"/>
    <property type="evidence" value="ECO:0007669"/>
    <property type="project" value="UniProtKB-KW"/>
</dbReference>
<dbReference type="GO" id="GO:0046872">
    <property type="term" value="F:metal ion binding"/>
    <property type="evidence" value="ECO:0007669"/>
    <property type="project" value="UniProtKB-UniRule"/>
</dbReference>
<dbReference type="GO" id="GO:0051287">
    <property type="term" value="F:NAD binding"/>
    <property type="evidence" value="ECO:0007669"/>
    <property type="project" value="UniProtKB-ARBA"/>
</dbReference>
<dbReference type="GO" id="GO:0003951">
    <property type="term" value="F:NAD+ kinase activity"/>
    <property type="evidence" value="ECO:0007669"/>
    <property type="project" value="UniProtKB-UniRule"/>
</dbReference>
<dbReference type="GO" id="GO:0019674">
    <property type="term" value="P:NAD metabolic process"/>
    <property type="evidence" value="ECO:0007669"/>
    <property type="project" value="InterPro"/>
</dbReference>
<dbReference type="GO" id="GO:0006741">
    <property type="term" value="P:NADP biosynthetic process"/>
    <property type="evidence" value="ECO:0007669"/>
    <property type="project" value="UniProtKB-UniRule"/>
</dbReference>
<dbReference type="Gene3D" id="3.40.50.10330">
    <property type="entry name" value="Probable inorganic polyphosphate/atp-NAD kinase, domain 1"/>
    <property type="match status" value="1"/>
</dbReference>
<dbReference type="Gene3D" id="2.60.200.30">
    <property type="entry name" value="Probable inorganic polyphosphate/atp-NAD kinase, domain 2"/>
    <property type="match status" value="1"/>
</dbReference>
<dbReference type="HAMAP" id="MF_00361">
    <property type="entry name" value="NAD_kinase"/>
    <property type="match status" value="1"/>
</dbReference>
<dbReference type="InterPro" id="IPR017438">
    <property type="entry name" value="ATP-NAD_kinase_N"/>
</dbReference>
<dbReference type="InterPro" id="IPR017437">
    <property type="entry name" value="ATP-NAD_kinase_PpnK-typ_C"/>
</dbReference>
<dbReference type="InterPro" id="IPR016064">
    <property type="entry name" value="NAD/diacylglycerol_kinase_sf"/>
</dbReference>
<dbReference type="InterPro" id="IPR002504">
    <property type="entry name" value="NADK"/>
</dbReference>
<dbReference type="NCBIfam" id="NF003424">
    <property type="entry name" value="PRK04885.1"/>
    <property type="match status" value="1"/>
</dbReference>
<dbReference type="PANTHER" id="PTHR20275">
    <property type="entry name" value="NAD KINASE"/>
    <property type="match status" value="1"/>
</dbReference>
<dbReference type="PANTHER" id="PTHR20275:SF0">
    <property type="entry name" value="NAD KINASE"/>
    <property type="match status" value="1"/>
</dbReference>
<dbReference type="Pfam" id="PF01513">
    <property type="entry name" value="NAD_kinase"/>
    <property type="match status" value="1"/>
</dbReference>
<dbReference type="Pfam" id="PF20143">
    <property type="entry name" value="NAD_kinase_C"/>
    <property type="match status" value="1"/>
</dbReference>
<dbReference type="SUPFAM" id="SSF111331">
    <property type="entry name" value="NAD kinase/diacylglycerol kinase-like"/>
    <property type="match status" value="1"/>
</dbReference>
<name>NADK_LACLA</name>
<proteinExistence type="inferred from homology"/>
<organism>
    <name type="scientific">Lactococcus lactis subsp. lactis (strain IL1403)</name>
    <name type="common">Streptococcus lactis</name>
    <dbReference type="NCBI Taxonomy" id="272623"/>
    <lineage>
        <taxon>Bacteria</taxon>
        <taxon>Bacillati</taxon>
        <taxon>Bacillota</taxon>
        <taxon>Bacilli</taxon>
        <taxon>Lactobacillales</taxon>
        <taxon>Streptococcaceae</taxon>
        <taxon>Lactococcus</taxon>
    </lineage>
</organism>
<comment type="function">
    <text evidence="1">Involved in the regulation of the intracellular balance of NAD and NADP, and is a key enzyme in the biosynthesis of NADP. Catalyzes specifically the phosphorylation on 2'-hydroxyl of the adenosine moiety of NAD to yield NADP.</text>
</comment>
<comment type="catalytic activity">
    <reaction evidence="1">
        <text>NAD(+) + ATP = ADP + NADP(+) + H(+)</text>
        <dbReference type="Rhea" id="RHEA:18629"/>
        <dbReference type="ChEBI" id="CHEBI:15378"/>
        <dbReference type="ChEBI" id="CHEBI:30616"/>
        <dbReference type="ChEBI" id="CHEBI:57540"/>
        <dbReference type="ChEBI" id="CHEBI:58349"/>
        <dbReference type="ChEBI" id="CHEBI:456216"/>
        <dbReference type="EC" id="2.7.1.23"/>
    </reaction>
</comment>
<comment type="cofactor">
    <cofactor evidence="1">
        <name>a divalent metal cation</name>
        <dbReference type="ChEBI" id="CHEBI:60240"/>
    </cofactor>
</comment>
<comment type="subcellular location">
    <subcellularLocation>
        <location evidence="1">Cytoplasm</location>
    </subcellularLocation>
</comment>
<comment type="similarity">
    <text evidence="1">Belongs to the NAD kinase family.</text>
</comment>